<organism>
    <name type="scientific">Borreliella afzelii (strain PKo)</name>
    <name type="common">Borrelia afzelii</name>
    <dbReference type="NCBI Taxonomy" id="390236"/>
    <lineage>
        <taxon>Bacteria</taxon>
        <taxon>Pseudomonadati</taxon>
        <taxon>Spirochaetota</taxon>
        <taxon>Spirochaetia</taxon>
        <taxon>Spirochaetales</taxon>
        <taxon>Borreliaceae</taxon>
        <taxon>Borreliella</taxon>
    </lineage>
</organism>
<reference key="1">
    <citation type="journal article" date="2006" name="BMC Genomics">
        <title>Comparative genome analysis: selection pressure on the Borrelia vls cassettes is essential for infectivity.</title>
        <authorList>
            <person name="Gloeckner G."/>
            <person name="Schulte-Spechtel U."/>
            <person name="Schilhabel M."/>
            <person name="Felder M."/>
            <person name="Suehnel J."/>
            <person name="Wilske B."/>
            <person name="Platzer M."/>
        </authorList>
    </citation>
    <scope>NUCLEOTIDE SEQUENCE [LARGE SCALE GENOMIC DNA]</scope>
    <source>
        <strain>PKo</strain>
    </source>
</reference>
<reference key="2">
    <citation type="journal article" date="2011" name="J. Bacteriol.">
        <title>Whole-genome sequences of two Borrelia afzelii and two Borrelia garinii Lyme disease agent isolates.</title>
        <authorList>
            <person name="Casjens S.R."/>
            <person name="Mongodin E.F."/>
            <person name="Qiu W.G."/>
            <person name="Dunn J.J."/>
            <person name="Luft B.J."/>
            <person name="Fraser-Liggett C.M."/>
            <person name="Schutzer S.E."/>
        </authorList>
    </citation>
    <scope>NUCLEOTIDE SEQUENCE [LARGE SCALE GENOMIC DNA]</scope>
    <source>
        <strain>PKo</strain>
    </source>
</reference>
<evidence type="ECO:0000255" key="1">
    <source>
        <dbReference type="HAMAP-Rule" id="MF_00050"/>
    </source>
</evidence>
<keyword id="KW-0963">Cytoplasm</keyword>
<keyword id="KW-0251">Elongation factor</keyword>
<keyword id="KW-0648">Protein biosynthesis</keyword>
<feature type="chain" id="PRO_1000006057" description="Elongation factor Ts">
    <location>
        <begin position="1"/>
        <end position="279"/>
    </location>
</feature>
<feature type="region of interest" description="Involved in Mg(2+) ion dislocation from EF-Tu" evidence="1">
    <location>
        <begin position="80"/>
        <end position="83"/>
    </location>
</feature>
<dbReference type="EMBL" id="CP000395">
    <property type="protein sequence ID" value="ABH01386.1"/>
    <property type="molecule type" value="Genomic_DNA"/>
</dbReference>
<dbReference type="EMBL" id="CP002933">
    <property type="protein sequence ID" value="AEL69353.1"/>
    <property type="molecule type" value="Genomic_DNA"/>
</dbReference>
<dbReference type="RefSeq" id="WP_004790539.1">
    <property type="nucleotide sequence ID" value="NZ_CP160066.1"/>
</dbReference>
<dbReference type="SMR" id="Q0SP42"/>
<dbReference type="STRING" id="29518.BLA32_03680"/>
<dbReference type="KEGG" id="baf:BAPKO_0123"/>
<dbReference type="KEGG" id="bafz:BafPKo_0120"/>
<dbReference type="PATRIC" id="fig|390236.22.peg.119"/>
<dbReference type="eggNOG" id="COG0264">
    <property type="taxonomic scope" value="Bacteria"/>
</dbReference>
<dbReference type="HOGENOM" id="CLU_047155_0_0_12"/>
<dbReference type="OrthoDB" id="9808348at2"/>
<dbReference type="Proteomes" id="UP000005216">
    <property type="component" value="Chromosome"/>
</dbReference>
<dbReference type="GO" id="GO:0005737">
    <property type="term" value="C:cytoplasm"/>
    <property type="evidence" value="ECO:0007669"/>
    <property type="project" value="UniProtKB-SubCell"/>
</dbReference>
<dbReference type="GO" id="GO:0003746">
    <property type="term" value="F:translation elongation factor activity"/>
    <property type="evidence" value="ECO:0007669"/>
    <property type="project" value="UniProtKB-UniRule"/>
</dbReference>
<dbReference type="CDD" id="cd14275">
    <property type="entry name" value="UBA_EF-Ts"/>
    <property type="match status" value="1"/>
</dbReference>
<dbReference type="FunFam" id="1.10.8.10:FF:000001">
    <property type="entry name" value="Elongation factor Ts"/>
    <property type="match status" value="1"/>
</dbReference>
<dbReference type="Gene3D" id="1.10.286.20">
    <property type="match status" value="1"/>
</dbReference>
<dbReference type="Gene3D" id="1.10.8.10">
    <property type="entry name" value="DNA helicase RuvA subunit, C-terminal domain"/>
    <property type="match status" value="1"/>
</dbReference>
<dbReference type="Gene3D" id="3.30.479.20">
    <property type="entry name" value="Elongation factor Ts, dimerisation domain"/>
    <property type="match status" value="2"/>
</dbReference>
<dbReference type="HAMAP" id="MF_00050">
    <property type="entry name" value="EF_Ts"/>
    <property type="match status" value="1"/>
</dbReference>
<dbReference type="InterPro" id="IPR036402">
    <property type="entry name" value="EF-Ts_dimer_sf"/>
</dbReference>
<dbReference type="InterPro" id="IPR001816">
    <property type="entry name" value="Transl_elong_EFTs/EF1B"/>
</dbReference>
<dbReference type="InterPro" id="IPR014039">
    <property type="entry name" value="Transl_elong_EFTs/EF1B_dimer"/>
</dbReference>
<dbReference type="InterPro" id="IPR018101">
    <property type="entry name" value="Transl_elong_Ts_CS"/>
</dbReference>
<dbReference type="InterPro" id="IPR009060">
    <property type="entry name" value="UBA-like_sf"/>
</dbReference>
<dbReference type="NCBIfam" id="TIGR00116">
    <property type="entry name" value="tsf"/>
    <property type="match status" value="1"/>
</dbReference>
<dbReference type="PANTHER" id="PTHR11741">
    <property type="entry name" value="ELONGATION FACTOR TS"/>
    <property type="match status" value="1"/>
</dbReference>
<dbReference type="PANTHER" id="PTHR11741:SF0">
    <property type="entry name" value="ELONGATION FACTOR TS, MITOCHONDRIAL"/>
    <property type="match status" value="1"/>
</dbReference>
<dbReference type="Pfam" id="PF00889">
    <property type="entry name" value="EF_TS"/>
    <property type="match status" value="1"/>
</dbReference>
<dbReference type="SUPFAM" id="SSF54713">
    <property type="entry name" value="Elongation factor Ts (EF-Ts), dimerisation domain"/>
    <property type="match status" value="2"/>
</dbReference>
<dbReference type="SUPFAM" id="SSF46934">
    <property type="entry name" value="UBA-like"/>
    <property type="match status" value="1"/>
</dbReference>
<dbReference type="PROSITE" id="PS01126">
    <property type="entry name" value="EF_TS_1"/>
    <property type="match status" value="1"/>
</dbReference>
<dbReference type="PROSITE" id="PS01127">
    <property type="entry name" value="EF_TS_2"/>
    <property type="match status" value="1"/>
</dbReference>
<sequence>MSIISPQDVKKLREETNAGFGDCKKALSAAGGDFELAKKKLREMGIASAEKRLDRDAKEGRVFSYSNNIHAGLLLVSCETDFVALNHNFVNFGNSLIKELVESGRNSLATSQELELKNLAATIKENIQVKKIFITEIQSNEFVKIYLHGEQSKIGVLVKLKVDDFSKTEDKMLQDFAMDLALHVAALAPIYLRNDDVCPNYIKEQEEIFAKQLELSGKSESIVKGIVAGKIKKHLAEISLLEQGFVKNDKLTVREMLEEVSKAISSKIEIVEFKYLRIG</sequence>
<comment type="function">
    <text evidence="1">Associates with the EF-Tu.GDP complex and induces the exchange of GDP to GTP. It remains bound to the aminoacyl-tRNA.EF-Tu.GTP complex up to the GTP hydrolysis stage on the ribosome.</text>
</comment>
<comment type="subcellular location">
    <subcellularLocation>
        <location evidence="1">Cytoplasm</location>
    </subcellularLocation>
</comment>
<comment type="similarity">
    <text evidence="1">Belongs to the EF-Ts family.</text>
</comment>
<protein>
    <recommendedName>
        <fullName evidence="1">Elongation factor Ts</fullName>
        <shortName evidence="1">EF-Ts</shortName>
    </recommendedName>
</protein>
<proteinExistence type="inferred from homology"/>
<name>EFTS_BORAP</name>
<accession>Q0SP42</accession>
<accession>G0IQW7</accession>
<gene>
    <name evidence="1" type="primary">tsf</name>
    <name type="ordered locus">BAPKO_0123</name>
    <name type="ordered locus">BafPKo_0120</name>
</gene>